<proteinExistence type="evidence at protein level"/>
<gene>
    <name type="ORF">MAJ_08936</name>
</gene>
<name>BTPSL_METMF</name>
<reference key="1">
    <citation type="journal article" date="2014" name="Proc. Natl. Acad. Sci. U.S.A.">
        <title>Trajectory and genomic determinants of fungal-pathogen speciation and host adaptation.</title>
        <authorList>
            <person name="Hu X."/>
            <person name="Xiao G."/>
            <person name="Zheng P."/>
            <person name="Shang Y."/>
            <person name="Su Y."/>
            <person name="Zhang X."/>
            <person name="Liu X."/>
            <person name="Zhan S."/>
            <person name="St Leger R.J."/>
            <person name="Wang C."/>
        </authorList>
    </citation>
    <scope>NUCLEOTIDE SEQUENCE [LARGE SCALE GENOMIC DNA]</scope>
    <source>
        <strain>ARSEF 297</strain>
    </source>
</reference>
<reference key="2">
    <citation type="journal article" date="2019" name="Sci. Rep.">
        <title>Terpene synthase genes originated from bacteria through horizontal gene transfer contribute to terpenoid diversity in fungi.</title>
        <authorList>
            <person name="Jia Q."/>
            <person name="Chen X."/>
            <person name="Koellner T.G."/>
            <person name="Rinkel J."/>
            <person name="Fu J."/>
            <person name="Labbe J."/>
            <person name="Xiong W."/>
            <person name="Dickschat J.S."/>
            <person name="Gershenzon J."/>
            <person name="Chen F."/>
        </authorList>
    </citation>
    <scope>FUNCTION</scope>
    <scope>CATALYTIC ACTIVITY</scope>
</reference>
<protein>
    <recommendedName>
        <fullName evidence="3">Sesquiterpene synthase MAJ_08936</fullName>
        <ecNumber evidence="2">4.2.3.163</ecNumber>
        <ecNumber evidence="2">4.2.3.171</ecNumber>
    </recommendedName>
    <alternativeName>
        <fullName evidence="3">Bacterial terpene synthase-like protein MAJ_08936</fullName>
        <shortName evidence="3">BTPSL</shortName>
    </alternativeName>
</protein>
<sequence>MEKQRLKAQLSSLRVPLFSVPWPGQCSNKAEVIEARMMKWADEHNLLVTDEYRNRVIRTRYGLLAARCYPNAGEVLLQAIADYLVWFFLADDLFVDRVEVATDETIRNLTAMVDVLDLNVAGSPPVFGELAWLDVCQRLRRLLQAEAFERFAQGMRLWATTAALQILNHLRPTPVGIREYQTIRRHTSGLNPCTSLADAANKGSVQACEFYDADVQTLVRQTNNIVCWANDIQSLRIEIHQPGQFRNMVTIYAQQGQSLQDAVETTATRVNKEIAGFCELADAVTARPISDELHGLIDGLEYWIRGYLDWVVHDTMRYADQFIESDADDRRFSAPDLSLLKKNCSSVTESTSSLV</sequence>
<accession>A0A0B4IF96</accession>
<organism>
    <name type="scientific">Metarhizium majus (strain ARSEF 297)</name>
    <dbReference type="NCBI Taxonomy" id="1276143"/>
    <lineage>
        <taxon>Eukaryota</taxon>
        <taxon>Fungi</taxon>
        <taxon>Dikarya</taxon>
        <taxon>Ascomycota</taxon>
        <taxon>Pezizomycotina</taxon>
        <taxon>Sordariomycetes</taxon>
        <taxon>Hypocreomycetidae</taxon>
        <taxon>Hypocreales</taxon>
        <taxon>Clavicipitaceae</taxon>
        <taxon>Metarhizium</taxon>
        <taxon>Metarhizium majus</taxon>
    </lineage>
</organism>
<feature type="chain" id="PRO_0000451046" description="Sesquiterpene synthase MAJ_08936">
    <location>
        <begin position="1"/>
        <end position="355"/>
    </location>
</feature>
<feature type="short sequence motif" description="DDXXXD motif" evidence="1">
    <location>
        <begin position="91"/>
        <end position="96"/>
    </location>
</feature>
<feature type="binding site" evidence="1">
    <location>
        <position position="91"/>
    </location>
    <ligand>
        <name>Mg(2+)</name>
        <dbReference type="ChEBI" id="CHEBI:18420"/>
        <label>1</label>
    </ligand>
</feature>
<feature type="binding site" evidence="1">
    <location>
        <position position="96"/>
    </location>
    <ligand>
        <name>Mg(2+)</name>
        <dbReference type="ChEBI" id="CHEBI:18420"/>
        <label>1</label>
    </ligand>
</feature>
<feature type="binding site" evidence="1">
    <location>
        <position position="96"/>
    </location>
    <ligand>
        <name>Mg(2+)</name>
        <dbReference type="ChEBI" id="CHEBI:18420"/>
        <label>2</label>
    </ligand>
</feature>
<feature type="binding site" evidence="1">
    <location>
        <position position="184"/>
    </location>
    <ligand>
        <name>substrate</name>
    </ligand>
</feature>
<feature type="binding site" evidence="1">
    <location>
        <position position="230"/>
    </location>
    <ligand>
        <name>Mg(2+)</name>
        <dbReference type="ChEBI" id="CHEBI:18420"/>
        <label>3</label>
    </ligand>
</feature>
<feature type="binding site" evidence="1">
    <location>
        <position position="234"/>
    </location>
    <ligand>
        <name>Mg(2+)</name>
        <dbReference type="ChEBI" id="CHEBI:18420"/>
        <label>3</label>
    </ligand>
</feature>
<feature type="binding site" evidence="1">
    <location>
        <position position="238"/>
    </location>
    <ligand>
        <name>Mg(2+)</name>
        <dbReference type="ChEBI" id="CHEBI:18420"/>
        <label>3</label>
    </ligand>
</feature>
<feature type="site" description="Plays a critical role in the stabilization of intermediate cation" evidence="1">
    <location>
        <position position="88"/>
    </location>
</feature>
<feature type="site" description="Plays a critical role for substrate recognition" evidence="1">
    <location>
        <position position="92"/>
    </location>
</feature>
<dbReference type="EC" id="4.2.3.163" evidence="2"/>
<dbReference type="EC" id="4.2.3.171" evidence="2"/>
<dbReference type="EMBL" id="AZNE01000088">
    <property type="protein sequence ID" value="KID95099.1"/>
    <property type="molecule type" value="Genomic_DNA"/>
</dbReference>
<dbReference type="RefSeq" id="XP_014574093.1">
    <property type="nucleotide sequence ID" value="XM_014718607.1"/>
</dbReference>
<dbReference type="SMR" id="A0A0B4IF96"/>
<dbReference type="HOGENOM" id="CLU_042538_4_2_1"/>
<dbReference type="OrthoDB" id="2861623at2759"/>
<dbReference type="GO" id="GO:0046872">
    <property type="term" value="F:metal ion binding"/>
    <property type="evidence" value="ECO:0007669"/>
    <property type="project" value="UniProtKB-KW"/>
</dbReference>
<dbReference type="GO" id="GO:0010333">
    <property type="term" value="F:terpene synthase activity"/>
    <property type="evidence" value="ECO:0007669"/>
    <property type="project" value="InterPro"/>
</dbReference>
<dbReference type="GO" id="GO:0008299">
    <property type="term" value="P:isoprenoid biosynthetic process"/>
    <property type="evidence" value="ECO:0007669"/>
    <property type="project" value="UniProtKB-ARBA"/>
</dbReference>
<dbReference type="Gene3D" id="1.10.600.10">
    <property type="entry name" value="Farnesyl Diphosphate Synthase"/>
    <property type="match status" value="1"/>
</dbReference>
<dbReference type="InterPro" id="IPR008949">
    <property type="entry name" value="Isoprenoid_synthase_dom_sf"/>
</dbReference>
<dbReference type="InterPro" id="IPR034686">
    <property type="entry name" value="Terpene_cyclase-like_2"/>
</dbReference>
<dbReference type="PANTHER" id="PTHR35201:SF4">
    <property type="entry name" value="BETA-PINACENE SYNTHASE-RELATED"/>
    <property type="match status" value="1"/>
</dbReference>
<dbReference type="PANTHER" id="PTHR35201">
    <property type="entry name" value="TERPENE SYNTHASE"/>
    <property type="match status" value="1"/>
</dbReference>
<dbReference type="Pfam" id="PF19086">
    <property type="entry name" value="Terpene_syn_C_2"/>
    <property type="match status" value="1"/>
</dbReference>
<dbReference type="SFLD" id="SFLDS00005">
    <property type="entry name" value="Isoprenoid_Synthase_Type_I"/>
    <property type="match status" value="1"/>
</dbReference>
<dbReference type="SFLD" id="SFLDG01020">
    <property type="entry name" value="Terpene_Cyclase_Like_2"/>
    <property type="match status" value="1"/>
</dbReference>
<dbReference type="SUPFAM" id="SSF48576">
    <property type="entry name" value="Terpenoid synthases"/>
    <property type="match status" value="1"/>
</dbReference>
<keyword id="KW-0456">Lyase</keyword>
<keyword id="KW-0460">Magnesium</keyword>
<keyword id="KW-0479">Metal-binding</keyword>
<comment type="function">
    <text evidence="2">Terpene synthase that catalyzes the conversion of (2E,6E)-farnesyl diphosphate (FPP) into sesquiterpenes which are important for fungi-environment interactions (PubMed:31239482). Produces a mixture consisting of 8 sesquiterpenes including corvol ethers A and B, as well as traces of epizonarene, gamma-cadinene, delta-cadinene, alpha-cadinene, alpha-cadinol, and an unidentified sesquiterpene (PubMed:31239482). The major product is corvol ether A (PubMed:31239482).</text>
</comment>
<comment type="catalytic activity">
    <reaction evidence="2">
        <text>(2E,6E)-farnesyl diphosphate + H2O = (+)-corvol ether B + diphosphate</text>
        <dbReference type="Rhea" id="RHEA:53644"/>
        <dbReference type="ChEBI" id="CHEBI:15377"/>
        <dbReference type="ChEBI" id="CHEBI:33019"/>
        <dbReference type="ChEBI" id="CHEBI:137536"/>
        <dbReference type="ChEBI" id="CHEBI:175763"/>
        <dbReference type="EC" id="4.2.3.163"/>
    </reaction>
    <physiologicalReaction direction="left-to-right" evidence="2">
        <dbReference type="Rhea" id="RHEA:53645"/>
    </physiologicalReaction>
</comment>
<comment type="catalytic activity">
    <reaction evidence="2">
        <text>(2E,6E)-farnesyl diphosphate + H2O = (+)-corvol ether A + diphosphate</text>
        <dbReference type="Rhea" id="RHEA:53648"/>
        <dbReference type="ChEBI" id="CHEBI:15377"/>
        <dbReference type="ChEBI" id="CHEBI:33019"/>
        <dbReference type="ChEBI" id="CHEBI:137535"/>
        <dbReference type="ChEBI" id="CHEBI:175763"/>
        <dbReference type="EC" id="4.2.3.171"/>
    </reaction>
    <physiologicalReaction direction="left-to-right" evidence="2">
        <dbReference type="Rhea" id="RHEA:53649"/>
    </physiologicalReaction>
</comment>
<comment type="cofactor">
    <cofactor evidence="1">
        <name>Mg(2+)</name>
        <dbReference type="ChEBI" id="CHEBI:18420"/>
    </cofactor>
    <text evidence="1">Binds 3 Mg(2+) ions per subunit.</text>
</comment>
<comment type="domain">
    <text evidence="1">The Asp-Asp-Xaa-Xaa-Xaa-Asp (DDXXXD) motif is important for the catalytic activity, presumably through binding to Mg(2+).</text>
</comment>
<comment type="similarity">
    <text evidence="4">Belongs to the terpene synthase family.</text>
</comment>
<evidence type="ECO:0000250" key="1">
    <source>
        <dbReference type="UniProtKB" id="B5HDJ6"/>
    </source>
</evidence>
<evidence type="ECO:0000269" key="2">
    <source>
    </source>
</evidence>
<evidence type="ECO:0000303" key="3">
    <source>
    </source>
</evidence>
<evidence type="ECO:0000305" key="4"/>